<proteinExistence type="inferred from homology"/>
<feature type="chain" id="PRO_1000057951" description="Phosphoglycerate kinase">
    <location>
        <begin position="1"/>
        <end position="403"/>
    </location>
</feature>
<feature type="binding site" evidence="1">
    <location>
        <begin position="21"/>
        <end position="23"/>
    </location>
    <ligand>
        <name>substrate</name>
    </ligand>
</feature>
<feature type="binding site" evidence="1">
    <location>
        <position position="37"/>
    </location>
    <ligand>
        <name>substrate</name>
    </ligand>
</feature>
<feature type="binding site" evidence="1">
    <location>
        <begin position="60"/>
        <end position="63"/>
    </location>
    <ligand>
        <name>substrate</name>
    </ligand>
</feature>
<feature type="binding site" evidence="1">
    <location>
        <position position="125"/>
    </location>
    <ligand>
        <name>substrate</name>
    </ligand>
</feature>
<feature type="binding site" evidence="1">
    <location>
        <position position="158"/>
    </location>
    <ligand>
        <name>substrate</name>
    </ligand>
</feature>
<feature type="binding site" evidence="1">
    <location>
        <position position="209"/>
    </location>
    <ligand>
        <name>ATP</name>
        <dbReference type="ChEBI" id="CHEBI:30616"/>
    </ligand>
</feature>
<feature type="binding site" evidence="1">
    <location>
        <position position="332"/>
    </location>
    <ligand>
        <name>ATP</name>
        <dbReference type="ChEBI" id="CHEBI:30616"/>
    </ligand>
</feature>
<feature type="binding site" evidence="1">
    <location>
        <begin position="359"/>
        <end position="362"/>
    </location>
    <ligand>
        <name>ATP</name>
        <dbReference type="ChEBI" id="CHEBI:30616"/>
    </ligand>
</feature>
<name>PGK_KORVE</name>
<organism>
    <name type="scientific">Koribacter versatilis (strain Ellin345)</name>
    <dbReference type="NCBI Taxonomy" id="204669"/>
    <lineage>
        <taxon>Bacteria</taxon>
        <taxon>Pseudomonadati</taxon>
        <taxon>Acidobacteriota</taxon>
        <taxon>Terriglobia</taxon>
        <taxon>Terriglobales</taxon>
        <taxon>Candidatus Korobacteraceae</taxon>
        <taxon>Candidatus Korobacter</taxon>
    </lineage>
</organism>
<dbReference type="EC" id="2.7.2.3" evidence="1"/>
<dbReference type="EMBL" id="CP000360">
    <property type="protein sequence ID" value="ABF41543.1"/>
    <property type="molecule type" value="Genomic_DNA"/>
</dbReference>
<dbReference type="RefSeq" id="WP_011523344.1">
    <property type="nucleotide sequence ID" value="NC_008009.1"/>
</dbReference>
<dbReference type="SMR" id="Q1INK7"/>
<dbReference type="STRING" id="204669.Acid345_2542"/>
<dbReference type="EnsemblBacteria" id="ABF41543">
    <property type="protein sequence ID" value="ABF41543"/>
    <property type="gene ID" value="Acid345_2542"/>
</dbReference>
<dbReference type="KEGG" id="aba:Acid345_2542"/>
<dbReference type="eggNOG" id="COG0126">
    <property type="taxonomic scope" value="Bacteria"/>
</dbReference>
<dbReference type="HOGENOM" id="CLU_025427_0_2_0"/>
<dbReference type="OrthoDB" id="9808460at2"/>
<dbReference type="UniPathway" id="UPA00109">
    <property type="reaction ID" value="UER00185"/>
</dbReference>
<dbReference type="Proteomes" id="UP000002432">
    <property type="component" value="Chromosome"/>
</dbReference>
<dbReference type="GO" id="GO:0005829">
    <property type="term" value="C:cytosol"/>
    <property type="evidence" value="ECO:0007669"/>
    <property type="project" value="TreeGrafter"/>
</dbReference>
<dbReference type="GO" id="GO:0043531">
    <property type="term" value="F:ADP binding"/>
    <property type="evidence" value="ECO:0007669"/>
    <property type="project" value="TreeGrafter"/>
</dbReference>
<dbReference type="GO" id="GO:0005524">
    <property type="term" value="F:ATP binding"/>
    <property type="evidence" value="ECO:0007669"/>
    <property type="project" value="UniProtKB-KW"/>
</dbReference>
<dbReference type="GO" id="GO:0004618">
    <property type="term" value="F:phosphoglycerate kinase activity"/>
    <property type="evidence" value="ECO:0007669"/>
    <property type="project" value="UniProtKB-UniRule"/>
</dbReference>
<dbReference type="GO" id="GO:0006094">
    <property type="term" value="P:gluconeogenesis"/>
    <property type="evidence" value="ECO:0007669"/>
    <property type="project" value="TreeGrafter"/>
</dbReference>
<dbReference type="GO" id="GO:0006096">
    <property type="term" value="P:glycolytic process"/>
    <property type="evidence" value="ECO:0007669"/>
    <property type="project" value="UniProtKB-UniRule"/>
</dbReference>
<dbReference type="CDD" id="cd00318">
    <property type="entry name" value="Phosphoglycerate_kinase"/>
    <property type="match status" value="1"/>
</dbReference>
<dbReference type="FunFam" id="3.40.50.1260:FF:000003">
    <property type="entry name" value="Phosphoglycerate kinase"/>
    <property type="match status" value="1"/>
</dbReference>
<dbReference type="FunFam" id="3.40.50.1260:FF:000006">
    <property type="entry name" value="Phosphoglycerate kinase"/>
    <property type="match status" value="1"/>
</dbReference>
<dbReference type="Gene3D" id="3.40.50.1260">
    <property type="entry name" value="Phosphoglycerate kinase, N-terminal domain"/>
    <property type="match status" value="2"/>
</dbReference>
<dbReference type="HAMAP" id="MF_00145">
    <property type="entry name" value="Phosphoglyc_kinase"/>
    <property type="match status" value="1"/>
</dbReference>
<dbReference type="InterPro" id="IPR001576">
    <property type="entry name" value="Phosphoglycerate_kinase"/>
</dbReference>
<dbReference type="InterPro" id="IPR015911">
    <property type="entry name" value="Phosphoglycerate_kinase_CS"/>
</dbReference>
<dbReference type="InterPro" id="IPR015824">
    <property type="entry name" value="Phosphoglycerate_kinase_N"/>
</dbReference>
<dbReference type="InterPro" id="IPR036043">
    <property type="entry name" value="Phosphoglycerate_kinase_sf"/>
</dbReference>
<dbReference type="PANTHER" id="PTHR11406">
    <property type="entry name" value="PHOSPHOGLYCERATE KINASE"/>
    <property type="match status" value="1"/>
</dbReference>
<dbReference type="PANTHER" id="PTHR11406:SF23">
    <property type="entry name" value="PHOSPHOGLYCERATE KINASE 1, CHLOROPLASTIC-RELATED"/>
    <property type="match status" value="1"/>
</dbReference>
<dbReference type="Pfam" id="PF00162">
    <property type="entry name" value="PGK"/>
    <property type="match status" value="1"/>
</dbReference>
<dbReference type="PIRSF" id="PIRSF000724">
    <property type="entry name" value="Pgk"/>
    <property type="match status" value="1"/>
</dbReference>
<dbReference type="PRINTS" id="PR00477">
    <property type="entry name" value="PHGLYCKINASE"/>
</dbReference>
<dbReference type="SUPFAM" id="SSF53748">
    <property type="entry name" value="Phosphoglycerate kinase"/>
    <property type="match status" value="1"/>
</dbReference>
<dbReference type="PROSITE" id="PS00111">
    <property type="entry name" value="PGLYCERATE_KINASE"/>
    <property type="match status" value="1"/>
</dbReference>
<gene>
    <name evidence="1" type="primary">pgk</name>
    <name type="ordered locus">Acid345_2542</name>
</gene>
<comment type="catalytic activity">
    <reaction evidence="1">
        <text>(2R)-3-phosphoglycerate + ATP = (2R)-3-phospho-glyceroyl phosphate + ADP</text>
        <dbReference type="Rhea" id="RHEA:14801"/>
        <dbReference type="ChEBI" id="CHEBI:30616"/>
        <dbReference type="ChEBI" id="CHEBI:57604"/>
        <dbReference type="ChEBI" id="CHEBI:58272"/>
        <dbReference type="ChEBI" id="CHEBI:456216"/>
        <dbReference type="EC" id="2.7.2.3"/>
    </reaction>
</comment>
<comment type="pathway">
    <text evidence="1">Carbohydrate degradation; glycolysis; pyruvate from D-glyceraldehyde 3-phosphate: step 2/5.</text>
</comment>
<comment type="subunit">
    <text evidence="1">Monomer.</text>
</comment>
<comment type="subcellular location">
    <subcellularLocation>
        <location evidence="1">Cytoplasm</location>
    </subcellularLocation>
</comment>
<comment type="similarity">
    <text evidence="1">Belongs to the phosphoglycerate kinase family.</text>
</comment>
<sequence>MSKLSIKDLQLSNKRVFMRVDFNVPLDENGRVTDDTRIRETLPTIEYALRHGAKLILCSHLGRPKGKPNPKMSLKPVAERLRVMLDHAISPGQNVGFSPDCIGMQAQEMAKQLEKGQALLLENVRFHAEEEKNDPAFAKELASLCELYVNDAFGSAHRAHASTEGITHYVEKSAAGLLMQKELDYLGKATSNPAKPFVAILGGAKVSDKIGVIQNLMAKVDAIIIGGGMAYTFLKAQGQEIGKSLFEADKLDLAKQILADAHKRGLKFLLPVDHVTADKFDMHATPHQIGEGQSIPAEQMALDIGPKTVALFSEEIAKARTIVWNGPMGVFEFDNFAKGTRAIAKAVAGNSGATSIVGGGDSVAAVHDAGVADKITHISTGGGASLEFLEGKKLPGVEALTNK</sequence>
<reference key="1">
    <citation type="journal article" date="2009" name="Appl. Environ. Microbiol.">
        <title>Three genomes from the phylum Acidobacteria provide insight into the lifestyles of these microorganisms in soils.</title>
        <authorList>
            <person name="Ward N.L."/>
            <person name="Challacombe J.F."/>
            <person name="Janssen P.H."/>
            <person name="Henrissat B."/>
            <person name="Coutinho P.M."/>
            <person name="Wu M."/>
            <person name="Xie G."/>
            <person name="Haft D.H."/>
            <person name="Sait M."/>
            <person name="Badger J."/>
            <person name="Barabote R.D."/>
            <person name="Bradley B."/>
            <person name="Brettin T.S."/>
            <person name="Brinkac L.M."/>
            <person name="Bruce D."/>
            <person name="Creasy T."/>
            <person name="Daugherty S.C."/>
            <person name="Davidsen T.M."/>
            <person name="DeBoy R.T."/>
            <person name="Detter J.C."/>
            <person name="Dodson R.J."/>
            <person name="Durkin A.S."/>
            <person name="Ganapathy A."/>
            <person name="Gwinn-Giglio M."/>
            <person name="Han C.S."/>
            <person name="Khouri H."/>
            <person name="Kiss H."/>
            <person name="Kothari S.P."/>
            <person name="Madupu R."/>
            <person name="Nelson K.E."/>
            <person name="Nelson W.C."/>
            <person name="Paulsen I."/>
            <person name="Penn K."/>
            <person name="Ren Q."/>
            <person name="Rosovitz M.J."/>
            <person name="Selengut J.D."/>
            <person name="Shrivastava S."/>
            <person name="Sullivan S.A."/>
            <person name="Tapia R."/>
            <person name="Thompson L.S."/>
            <person name="Watkins K.L."/>
            <person name="Yang Q."/>
            <person name="Yu C."/>
            <person name="Zafar N."/>
            <person name="Zhou L."/>
            <person name="Kuske C.R."/>
        </authorList>
    </citation>
    <scope>NUCLEOTIDE SEQUENCE [LARGE SCALE GENOMIC DNA]</scope>
    <source>
        <strain>Ellin345</strain>
    </source>
</reference>
<keyword id="KW-0067">ATP-binding</keyword>
<keyword id="KW-0963">Cytoplasm</keyword>
<keyword id="KW-0324">Glycolysis</keyword>
<keyword id="KW-0418">Kinase</keyword>
<keyword id="KW-0547">Nucleotide-binding</keyword>
<keyword id="KW-1185">Reference proteome</keyword>
<keyword id="KW-0808">Transferase</keyword>
<evidence type="ECO:0000255" key="1">
    <source>
        <dbReference type="HAMAP-Rule" id="MF_00145"/>
    </source>
</evidence>
<accession>Q1INK7</accession>
<protein>
    <recommendedName>
        <fullName evidence="1">Phosphoglycerate kinase</fullName>
        <ecNumber evidence="1">2.7.2.3</ecNumber>
    </recommendedName>
</protein>